<accession>Q82DR8</accession>
<feature type="chain" id="PRO_0000216146" description="UPF0336 protein SAV_4901">
    <location>
        <begin position="1"/>
        <end position="150"/>
    </location>
</feature>
<feature type="domain" description="MaoC-like">
    <location>
        <begin position="8"/>
        <end position="126"/>
    </location>
</feature>
<gene>
    <name type="ordered locus">SAV_4901</name>
</gene>
<organism>
    <name type="scientific">Streptomyces avermitilis (strain ATCC 31267 / DSM 46492 / JCM 5070 / NBRC 14893 / NCIMB 12804 / NRRL 8165 / MA-4680)</name>
    <dbReference type="NCBI Taxonomy" id="227882"/>
    <lineage>
        <taxon>Bacteria</taxon>
        <taxon>Bacillati</taxon>
        <taxon>Actinomycetota</taxon>
        <taxon>Actinomycetes</taxon>
        <taxon>Kitasatosporales</taxon>
        <taxon>Streptomycetaceae</taxon>
        <taxon>Streptomyces</taxon>
    </lineage>
</organism>
<reference key="1">
    <citation type="journal article" date="2001" name="Proc. Natl. Acad. Sci. U.S.A.">
        <title>Genome sequence of an industrial microorganism Streptomyces avermitilis: deducing the ability of producing secondary metabolites.</title>
        <authorList>
            <person name="Omura S."/>
            <person name="Ikeda H."/>
            <person name="Ishikawa J."/>
            <person name="Hanamoto A."/>
            <person name="Takahashi C."/>
            <person name="Shinose M."/>
            <person name="Takahashi Y."/>
            <person name="Horikawa H."/>
            <person name="Nakazawa H."/>
            <person name="Osonoe T."/>
            <person name="Kikuchi H."/>
            <person name="Shiba T."/>
            <person name="Sakaki Y."/>
            <person name="Hattori M."/>
        </authorList>
    </citation>
    <scope>NUCLEOTIDE SEQUENCE [LARGE SCALE GENOMIC DNA]</scope>
    <source>
        <strain>ATCC 31267 / DSM 46492 / JCM 5070 / NBRC 14893 / NCIMB 12804 / NRRL 8165 / MA-4680</strain>
    </source>
</reference>
<reference key="2">
    <citation type="journal article" date="2003" name="Nat. Biotechnol.">
        <title>Complete genome sequence and comparative analysis of the industrial microorganism Streptomyces avermitilis.</title>
        <authorList>
            <person name="Ikeda H."/>
            <person name="Ishikawa J."/>
            <person name="Hanamoto A."/>
            <person name="Shinose M."/>
            <person name="Kikuchi H."/>
            <person name="Shiba T."/>
            <person name="Sakaki Y."/>
            <person name="Hattori M."/>
            <person name="Omura S."/>
        </authorList>
    </citation>
    <scope>NUCLEOTIDE SEQUENCE [LARGE SCALE GENOMIC DNA]</scope>
    <source>
        <strain>ATCC 31267 / DSM 46492 / JCM 5070 / NBRC 14893 / NCIMB 12804 / NRRL 8165 / MA-4680</strain>
    </source>
</reference>
<sequence length="150" mass="16162">MALDQSFVGRSYPPTDPYEVGREKIREFAEAVGDPNPVYTDPEAAKALGYADVIAPPTFVFAITFKAAGQVVQDPQLGLDYSRVVHGDQKFAYTRPVRAGDRLTVTSTIESIKSLAGNDVVDVRGEVHDEAGEHVVTAITKLVARAAEEG</sequence>
<protein>
    <recommendedName>
        <fullName evidence="1">UPF0336 protein SAV_4901</fullName>
    </recommendedName>
</protein>
<dbReference type="EMBL" id="BA000030">
    <property type="protein sequence ID" value="BAC72613.1"/>
    <property type="molecule type" value="Genomic_DNA"/>
</dbReference>
<dbReference type="RefSeq" id="WP_010986320.1">
    <property type="nucleotide sequence ID" value="NZ_JZJK01000077.1"/>
</dbReference>
<dbReference type="SMR" id="Q82DR8"/>
<dbReference type="GeneID" id="41541984"/>
<dbReference type="KEGG" id="sma:SAVERM_4901"/>
<dbReference type="eggNOG" id="COG2030">
    <property type="taxonomic scope" value="Bacteria"/>
</dbReference>
<dbReference type="HOGENOM" id="CLU_116276_0_0_11"/>
<dbReference type="OrthoDB" id="5415111at2"/>
<dbReference type="Proteomes" id="UP000000428">
    <property type="component" value="Chromosome"/>
</dbReference>
<dbReference type="GO" id="GO:0019171">
    <property type="term" value="F:(3R)-hydroxyacyl-[acyl-carrier-protein] dehydratase activity"/>
    <property type="evidence" value="ECO:0007669"/>
    <property type="project" value="TreeGrafter"/>
</dbReference>
<dbReference type="GO" id="GO:0006633">
    <property type="term" value="P:fatty acid biosynthetic process"/>
    <property type="evidence" value="ECO:0007669"/>
    <property type="project" value="TreeGrafter"/>
</dbReference>
<dbReference type="CDD" id="cd03441">
    <property type="entry name" value="R_hydratase_like"/>
    <property type="match status" value="1"/>
</dbReference>
<dbReference type="Gene3D" id="3.10.129.10">
    <property type="entry name" value="Hotdog Thioesterase"/>
    <property type="match status" value="1"/>
</dbReference>
<dbReference type="HAMAP" id="MF_00799">
    <property type="entry name" value="UPF0336"/>
    <property type="match status" value="1"/>
</dbReference>
<dbReference type="InterPro" id="IPR039569">
    <property type="entry name" value="FAS1-like_DH_region"/>
</dbReference>
<dbReference type="InterPro" id="IPR016709">
    <property type="entry name" value="HadA-like"/>
</dbReference>
<dbReference type="InterPro" id="IPR029069">
    <property type="entry name" value="HotDog_dom_sf"/>
</dbReference>
<dbReference type="InterPro" id="IPR050965">
    <property type="entry name" value="UPF0336/Enoyl-CoA_hydratase"/>
</dbReference>
<dbReference type="PANTHER" id="PTHR43437:SF3">
    <property type="entry name" value="HYDROXYACYL-THIOESTER DEHYDRATASE TYPE 2, MITOCHONDRIAL"/>
    <property type="match status" value="1"/>
</dbReference>
<dbReference type="PANTHER" id="PTHR43437">
    <property type="entry name" value="HYDROXYACYL-THIOESTER DEHYDRATASE TYPE 2, MITOCHONDRIAL-RELATED"/>
    <property type="match status" value="1"/>
</dbReference>
<dbReference type="Pfam" id="PF13452">
    <property type="entry name" value="FAS1_DH_region"/>
    <property type="match status" value="1"/>
</dbReference>
<dbReference type="PIRSF" id="PIRSF018072">
    <property type="entry name" value="UCP018072"/>
    <property type="match status" value="1"/>
</dbReference>
<dbReference type="SUPFAM" id="SSF54637">
    <property type="entry name" value="Thioesterase/thiol ester dehydrase-isomerase"/>
    <property type="match status" value="1"/>
</dbReference>
<comment type="similarity">
    <text evidence="1">Belongs to the UPF0336 family.</text>
</comment>
<proteinExistence type="inferred from homology"/>
<evidence type="ECO:0000255" key="1">
    <source>
        <dbReference type="HAMAP-Rule" id="MF_00799"/>
    </source>
</evidence>
<name>Y4901_STRAW</name>
<keyword id="KW-1185">Reference proteome</keyword>